<comment type="function">
    <text>Human saliva appears to contain several cysteine proteinase inhibitors that are immunologically related to cystatin S but that differ in their specificity due to amino acid sequence differences. Cystatin SN, with a pI of 7.5, is a much better inhibitor of papain and dipeptidyl peptidase I than is cystatin S, although both inhibit ficin equally well.</text>
</comment>
<comment type="interaction">
    <interactant intactId="EBI-1056240">
        <id>P01037</id>
    </interactant>
    <interactant intactId="EBI-12092171">
        <id>Q12797-6</id>
        <label>ASPH</label>
    </interactant>
    <organismsDiffer>false</organismsDiffer>
    <experiments>3</experiments>
</comment>
<comment type="interaction">
    <interactant intactId="EBI-1056240">
        <id>P01037</id>
    </interactant>
    <interactant intactId="EBI-348169">
        <id>P67870</id>
        <label>CSNK2B</label>
    </interactant>
    <organismsDiffer>false</organismsDiffer>
    <experiments>3</experiments>
</comment>
<comment type="interaction">
    <interactant intactId="EBI-1056240">
        <id>P01037</id>
    </interactant>
    <interactant intactId="EBI-725665">
        <id>Q9Y5U9</id>
        <label>IER3IP1</label>
    </interactant>
    <organismsDiffer>false</organismsDiffer>
    <experiments>3</experiments>
</comment>
<comment type="interaction">
    <interactant intactId="EBI-1056240">
        <id>P01037</id>
    </interactant>
    <interactant intactId="EBI-347996">
        <id>O43765</id>
        <label>SGTA</label>
    </interactant>
    <organismsDiffer>false</organismsDiffer>
    <experiments>3</experiments>
</comment>
<comment type="interaction">
    <interactant intactId="EBI-1056240">
        <id>P01037</id>
    </interactant>
    <interactant intactId="EBI-947187">
        <id>Q9UHD9</id>
        <label>UBQLN2</label>
    </interactant>
    <organismsDiffer>false</organismsDiffer>
    <experiments>3</experiments>
</comment>
<comment type="subcellular location">
    <subcellularLocation>
        <location evidence="4">Secreted</location>
    </subcellularLocation>
</comment>
<comment type="tissue specificity">
    <text evidence="4">Expressed in submandibular and sublingual saliva but not in parotid saliva (at protein level). Expressed in saliva, tears, urine and seminal fluid.</text>
</comment>
<comment type="mass spectrometry"/>
<comment type="mass spectrometry">
    <text>Variant Leu-31.</text>
</comment>
<comment type="similarity">
    <text evidence="7">Belongs to the cystatin family.</text>
</comment>
<feature type="signal peptide" evidence="1 2 3">
    <location>
        <begin position="1"/>
        <end position="20"/>
    </location>
</feature>
<feature type="chain" id="PRO_0000006649" description="Cystatin-SN">
    <location>
        <begin position="21"/>
        <end position="141"/>
    </location>
</feature>
<feature type="short sequence motif" description="Secondary area of contact">
    <location>
        <begin position="76"/>
        <end position="80"/>
    </location>
</feature>
<feature type="site" description="Reactive site">
    <location>
        <position position="32"/>
    </location>
</feature>
<feature type="disulfide bond" evidence="4">
    <location>
        <begin position="94"/>
        <end position="104"/>
    </location>
</feature>
<feature type="disulfide bond" evidence="4">
    <location>
        <begin position="118"/>
        <end position="138"/>
    </location>
</feature>
<feature type="sequence variant" id="VAR_028932" description="In dbSNP:rs6076122." evidence="5 6">
    <original>Y</original>
    <variation>H</variation>
    <location>
        <position position="4"/>
    </location>
</feature>
<feature type="sequence variant" id="VAR_028933" description="In dbSNP:rs2070856.">
    <original>P</original>
    <variation>L</variation>
    <location>
        <position position="31"/>
    </location>
</feature>
<feature type="sequence variant" id="VAR_028934" description="In dbSNP:rs3188319.">
    <original>N</original>
    <variation>D</variation>
    <location>
        <position position="129"/>
    </location>
</feature>
<feature type="sequence variant" id="VAR_028935" description="In dbSNP:rs3188320.">
    <original>R</original>
    <variation>M</variation>
    <location>
        <position position="131"/>
    </location>
</feature>
<feature type="sequence variant" id="VAR_028936" description="In dbSNP:rs3188322.">
    <original>K</original>
    <variation>N</variation>
    <location>
        <position position="135"/>
    </location>
</feature>
<reference key="1">
    <citation type="journal article" date="1987" name="Gene">
        <title>Human cysteine-proteinase inhibitors: nucleotide sequence analysis of three members of the cystatin gene family.</title>
        <authorList>
            <person name="Saitoh E."/>
            <person name="Kim H.-S."/>
            <person name="Smithies O."/>
            <person name="Maeda N."/>
        </authorList>
    </citation>
    <scope>NUCLEOTIDE SEQUENCE [GENOMIC DNA]</scope>
    <scope>VARIANT HIS-4</scope>
</reference>
<reference key="2">
    <citation type="journal article" date="1988" name="J. Biol. Chem.">
        <title>Purification, molecular cloning, and sequencing of salivary cystatin SA-1.</title>
        <authorList>
            <person name="Al-Hashimi I."/>
            <person name="Dickinson D.P."/>
            <person name="Levine M.J."/>
        </authorList>
    </citation>
    <scope>NUCLEOTIDE SEQUENCE [MRNA]</scope>
    <scope>VARIANT HIS-4</scope>
</reference>
<reference key="3">
    <citation type="journal article" date="2001" name="Nature">
        <title>The DNA sequence and comparative analysis of human chromosome 20.</title>
        <authorList>
            <person name="Deloukas P."/>
            <person name="Matthews L.H."/>
            <person name="Ashurst J.L."/>
            <person name="Burton J."/>
            <person name="Gilbert J.G.R."/>
            <person name="Jones M."/>
            <person name="Stavrides G."/>
            <person name="Almeida J.P."/>
            <person name="Babbage A.K."/>
            <person name="Bagguley C.L."/>
            <person name="Bailey J."/>
            <person name="Barlow K.F."/>
            <person name="Bates K.N."/>
            <person name="Beard L.M."/>
            <person name="Beare D.M."/>
            <person name="Beasley O.P."/>
            <person name="Bird C.P."/>
            <person name="Blakey S.E."/>
            <person name="Bridgeman A.M."/>
            <person name="Brown A.J."/>
            <person name="Buck D."/>
            <person name="Burrill W.D."/>
            <person name="Butler A.P."/>
            <person name="Carder C."/>
            <person name="Carter N.P."/>
            <person name="Chapman J.C."/>
            <person name="Clamp M."/>
            <person name="Clark G."/>
            <person name="Clark L.N."/>
            <person name="Clark S.Y."/>
            <person name="Clee C.M."/>
            <person name="Clegg S."/>
            <person name="Cobley V.E."/>
            <person name="Collier R.E."/>
            <person name="Connor R.E."/>
            <person name="Corby N.R."/>
            <person name="Coulson A."/>
            <person name="Coville G.J."/>
            <person name="Deadman R."/>
            <person name="Dhami P.D."/>
            <person name="Dunn M."/>
            <person name="Ellington A.G."/>
            <person name="Frankland J.A."/>
            <person name="Fraser A."/>
            <person name="French L."/>
            <person name="Garner P."/>
            <person name="Grafham D.V."/>
            <person name="Griffiths C."/>
            <person name="Griffiths M.N.D."/>
            <person name="Gwilliam R."/>
            <person name="Hall R.E."/>
            <person name="Hammond S."/>
            <person name="Harley J.L."/>
            <person name="Heath P.D."/>
            <person name="Ho S."/>
            <person name="Holden J.L."/>
            <person name="Howden P.J."/>
            <person name="Huckle E."/>
            <person name="Hunt A.R."/>
            <person name="Hunt S.E."/>
            <person name="Jekosch K."/>
            <person name="Johnson C.M."/>
            <person name="Johnson D."/>
            <person name="Kay M.P."/>
            <person name="Kimberley A.M."/>
            <person name="King A."/>
            <person name="Knights A."/>
            <person name="Laird G.K."/>
            <person name="Lawlor S."/>
            <person name="Lehvaeslaiho M.H."/>
            <person name="Leversha M.A."/>
            <person name="Lloyd C."/>
            <person name="Lloyd D.M."/>
            <person name="Lovell J.D."/>
            <person name="Marsh V.L."/>
            <person name="Martin S.L."/>
            <person name="McConnachie L.J."/>
            <person name="McLay K."/>
            <person name="McMurray A.A."/>
            <person name="Milne S.A."/>
            <person name="Mistry D."/>
            <person name="Moore M.J.F."/>
            <person name="Mullikin J.C."/>
            <person name="Nickerson T."/>
            <person name="Oliver K."/>
            <person name="Parker A."/>
            <person name="Patel R."/>
            <person name="Pearce T.A.V."/>
            <person name="Peck A.I."/>
            <person name="Phillimore B.J.C.T."/>
            <person name="Prathalingam S.R."/>
            <person name="Plumb R.W."/>
            <person name="Ramsay H."/>
            <person name="Rice C.M."/>
            <person name="Ross M.T."/>
            <person name="Scott C.E."/>
            <person name="Sehra H.K."/>
            <person name="Shownkeen R."/>
            <person name="Sims S."/>
            <person name="Skuce C.D."/>
            <person name="Smith M.L."/>
            <person name="Soderlund C."/>
            <person name="Steward C.A."/>
            <person name="Sulston J.E."/>
            <person name="Swann R.M."/>
            <person name="Sycamore N."/>
            <person name="Taylor R."/>
            <person name="Tee L."/>
            <person name="Thomas D.W."/>
            <person name="Thorpe A."/>
            <person name="Tracey A."/>
            <person name="Tromans A.C."/>
            <person name="Vaudin M."/>
            <person name="Wall M."/>
            <person name="Wallis J.M."/>
            <person name="Whitehead S.L."/>
            <person name="Whittaker P."/>
            <person name="Willey D.L."/>
            <person name="Williams L."/>
            <person name="Williams S.A."/>
            <person name="Wilming L."/>
            <person name="Wray P.W."/>
            <person name="Hubbard T."/>
            <person name="Durbin R.M."/>
            <person name="Bentley D.R."/>
            <person name="Beck S."/>
            <person name="Rogers J."/>
        </authorList>
    </citation>
    <scope>NUCLEOTIDE SEQUENCE [LARGE SCALE GENOMIC DNA]</scope>
</reference>
<reference key="4">
    <citation type="journal article" date="2004" name="Genome Res.">
        <title>The status, quality, and expansion of the NIH full-length cDNA project: the Mammalian Gene Collection (MGC).</title>
        <authorList>
            <consortium name="The MGC Project Team"/>
        </authorList>
    </citation>
    <scope>NUCLEOTIDE SEQUENCE [LARGE SCALE MRNA]</scope>
    <source>
        <tissue>Skin</tissue>
    </source>
</reference>
<reference key="5">
    <citation type="journal article" date="1988" name="Biol. Chem. Hoppe-Seyler">
        <title>Cystatin superfamily. Evidence that family II cystatin genes are evolutionarily related to family III cystatin genes.</title>
        <authorList>
            <person name="Saitoh E."/>
            <person name="Isemura S."/>
            <person name="Sanada K."/>
            <person name="Kim H.-S."/>
            <person name="Smithies O."/>
            <person name="Maeda N."/>
        </authorList>
    </citation>
    <scope>NUCLEOTIDE SEQUENCE [MRNA] OF 21-141</scope>
</reference>
<reference key="6">
    <citation type="journal article" date="1991" name="J. Biochem.">
        <title>Identification of full-sized forms of salivary (S-type) cystatins (cystatin SN, cystatin SA, cystatin S, and two phosphorylated forms of cystatin S) in human whole saliva and determination of phosphorylation sites of cystatin S.</title>
        <authorList>
            <person name="Isemura S."/>
            <person name="Saitoh E."/>
            <person name="Sanada K."/>
            <person name="Minakata K."/>
        </authorList>
    </citation>
    <scope>PROTEIN SEQUENCE OF 21-40</scope>
    <source>
        <tissue>Saliva</tissue>
    </source>
</reference>
<reference key="7">
    <citation type="journal article" date="2002" name="Proteomics">
        <title>Newly identified proteins in human nasal lavage fluid from non-smokers and smokers using two-dimensional gel electrophoresis and peptide mass fingerprinting.</title>
        <authorList>
            <person name="Ghafouri B."/>
            <person name="Stahlbom B."/>
            <person name="Tagesson C."/>
            <person name="Lindahl M."/>
        </authorList>
    </citation>
    <scope>PROTEIN SEQUENCE OF 21-32</scope>
</reference>
<reference key="8">
    <citation type="journal article" date="1986" name="FEBS Lett.">
        <title>Characterization of a new cysteine proteinase inhibitor of human saliva, cystatin SN, which is immunologically related to cystatin S.</title>
        <authorList>
            <person name="Isemura S."/>
            <person name="Saitoh E."/>
            <person name="Sanada K."/>
        </authorList>
    </citation>
    <scope>PROTEIN SEQUENCE OF 29-141</scope>
</reference>
<reference key="9">
    <citation type="journal article" date="2004" name="Protein Sci.">
        <title>Signal peptide prediction based on analysis of experimentally verified cleavage sites.</title>
        <authorList>
            <person name="Zhang Z."/>
            <person name="Henzel W.J."/>
        </authorList>
    </citation>
    <scope>PROTEIN SEQUENCE OF 21-35</scope>
</reference>
<reference key="10">
    <citation type="journal article" date="2015" name="J. Proteome Res.">
        <title>Human basal tear peptidome characterization by CID, HCD, and ETD followed by in silico and in vitro analyses for antimicrobial peptide identification.</title>
        <authorList>
            <person name="Azkargorta M."/>
            <person name="Soria J."/>
            <person name="Ojeda C."/>
            <person name="Guzman F."/>
            <person name="Acera A."/>
            <person name="Iloro I."/>
            <person name="Suarez T."/>
            <person name="Elortza F."/>
        </authorList>
    </citation>
    <scope>PROTEIN SEQUENCE OF 105-141</scope>
    <scope>IDENTIFICATION BY MASS SPECTROMETRY</scope>
    <source>
        <tissue>Tear</tissue>
    </source>
</reference>
<reference key="11">
    <citation type="journal article" date="2010" name="J. Am. Soc. Mass Spectrom.">
        <title>Confident assignment of intact mass tags to human salivary cystatins using top-down Fourier-transform ion cyclotron resonance mass spectrometry.</title>
        <authorList>
            <person name="Ryan C.M."/>
            <person name="Souda P."/>
            <person name="Halgand F."/>
            <person name="Wong D.T."/>
            <person name="Loo J.A."/>
            <person name="Faull K.F."/>
            <person name="Whitelegge J.P."/>
        </authorList>
    </citation>
    <scope>DISULFIDE BONDS</scope>
    <scope>TISSUE SPECIFICITY</scope>
    <scope>SUBCELLULAR LOCATION</scope>
    <scope>MASS SPECTROMETRY</scope>
    <source>
        <tissue>Saliva</tissue>
    </source>
</reference>
<proteinExistence type="evidence at protein level"/>
<gene>
    <name type="primary">CST1</name>
</gene>
<accession>P01037</accession>
<accession>Q96LE6</accession>
<accession>Q9UCQ6</accession>
<organism>
    <name type="scientific">Homo sapiens</name>
    <name type="common">Human</name>
    <dbReference type="NCBI Taxonomy" id="9606"/>
    <lineage>
        <taxon>Eukaryota</taxon>
        <taxon>Metazoa</taxon>
        <taxon>Chordata</taxon>
        <taxon>Craniata</taxon>
        <taxon>Vertebrata</taxon>
        <taxon>Euteleostomi</taxon>
        <taxon>Mammalia</taxon>
        <taxon>Eutheria</taxon>
        <taxon>Euarchontoglires</taxon>
        <taxon>Primates</taxon>
        <taxon>Haplorrhini</taxon>
        <taxon>Catarrhini</taxon>
        <taxon>Hominidae</taxon>
        <taxon>Homo</taxon>
    </lineage>
</organism>
<protein>
    <recommendedName>
        <fullName>Cystatin-SN</fullName>
    </recommendedName>
    <alternativeName>
        <fullName>Cystain-SA-I</fullName>
    </alternativeName>
    <alternativeName>
        <fullName>Cystatin-1</fullName>
    </alternativeName>
    <alternativeName>
        <fullName>Salivary cystatin-SA-1</fullName>
    </alternativeName>
</protein>
<name>CYTN_HUMAN</name>
<dbReference type="EMBL" id="M19169">
    <property type="protein sequence ID" value="AAA36115.1"/>
    <property type="molecule type" value="Genomic_DNA"/>
</dbReference>
<dbReference type="EMBL" id="J03870">
    <property type="protein sequence ID" value="AAA60299.1"/>
    <property type="molecule type" value="mRNA"/>
</dbReference>
<dbReference type="EMBL" id="AL591074">
    <property type="status" value="NOT_ANNOTATED_CDS"/>
    <property type="molecule type" value="Genomic_DNA"/>
</dbReference>
<dbReference type="EMBL" id="BC021225">
    <property type="protein sequence ID" value="AAH21225.1"/>
    <property type="molecule type" value="mRNA"/>
</dbReference>
<dbReference type="CCDS" id="CCDS13160.1"/>
<dbReference type="PIR" id="A28110">
    <property type="entry name" value="UDHUP2"/>
</dbReference>
<dbReference type="RefSeq" id="NP_001889.2">
    <property type="nucleotide sequence ID" value="NM_001898.2"/>
</dbReference>
<dbReference type="SMR" id="P01037"/>
<dbReference type="BioGRID" id="107851">
    <property type="interactions" value="157"/>
</dbReference>
<dbReference type="FunCoup" id="P01037">
    <property type="interactions" value="389"/>
</dbReference>
<dbReference type="IntAct" id="P01037">
    <property type="interactions" value="72"/>
</dbReference>
<dbReference type="MINT" id="P01037"/>
<dbReference type="STRING" id="9606.ENSP00000305731"/>
<dbReference type="MEROPS" id="I25.010"/>
<dbReference type="BioMuta" id="CST1"/>
<dbReference type="DMDM" id="311033460"/>
<dbReference type="jPOST" id="P01037"/>
<dbReference type="MassIVE" id="P01037"/>
<dbReference type="PaxDb" id="9606-ENSP00000305731"/>
<dbReference type="PeptideAtlas" id="P01037"/>
<dbReference type="PRIDE" id="P01037"/>
<dbReference type="ProteomicsDB" id="51313"/>
<dbReference type="TopDownProteomics" id="P01037"/>
<dbReference type="Antibodypedia" id="24921">
    <property type="antibodies" value="254 antibodies from 30 providers"/>
</dbReference>
<dbReference type="DNASU" id="1469"/>
<dbReference type="Ensembl" id="ENST00000304749.7">
    <property type="protein sequence ID" value="ENSP00000305731.2"/>
    <property type="gene ID" value="ENSG00000170373.9"/>
</dbReference>
<dbReference type="Ensembl" id="ENST00000398402.1">
    <property type="protein sequence ID" value="ENSP00000381439.1"/>
    <property type="gene ID" value="ENSG00000170373.9"/>
</dbReference>
<dbReference type="GeneID" id="1469"/>
<dbReference type="KEGG" id="hsa:1469"/>
<dbReference type="MANE-Select" id="ENST00000304749.7">
    <property type="protein sequence ID" value="ENSP00000305731.2"/>
    <property type="RefSeq nucleotide sequence ID" value="NM_001898.3"/>
    <property type="RefSeq protein sequence ID" value="NP_001889.2"/>
</dbReference>
<dbReference type="UCSC" id="uc002wtp.3">
    <property type="organism name" value="human"/>
</dbReference>
<dbReference type="AGR" id="HGNC:2473"/>
<dbReference type="CTD" id="1469"/>
<dbReference type="DisGeNET" id="1469"/>
<dbReference type="GeneCards" id="CST1"/>
<dbReference type="HGNC" id="HGNC:2473">
    <property type="gene designation" value="CST1"/>
</dbReference>
<dbReference type="HPA" id="ENSG00000170373">
    <property type="expression patterns" value="Tissue enriched (salivary)"/>
</dbReference>
<dbReference type="MIM" id="123855">
    <property type="type" value="gene"/>
</dbReference>
<dbReference type="neXtProt" id="NX_P01037"/>
<dbReference type="OpenTargets" id="ENSG00000170373"/>
<dbReference type="PharmGKB" id="PA26972"/>
<dbReference type="VEuPathDB" id="HostDB:ENSG00000170373"/>
<dbReference type="eggNOG" id="ENOG502SC50">
    <property type="taxonomic scope" value="Eukaryota"/>
</dbReference>
<dbReference type="GeneTree" id="ENSGT00940000163410"/>
<dbReference type="HOGENOM" id="CLU_118168_0_1_1"/>
<dbReference type="InParanoid" id="P01037"/>
<dbReference type="OMA" id="LTRNECH"/>
<dbReference type="OrthoDB" id="9529840at2759"/>
<dbReference type="PAN-GO" id="P01037">
    <property type="GO annotations" value="6 GO annotations based on evolutionary models"/>
</dbReference>
<dbReference type="PhylomeDB" id="P01037"/>
<dbReference type="PathwayCommons" id="P01037"/>
<dbReference type="SignaLink" id="P01037"/>
<dbReference type="BioGRID-ORCS" id="1469">
    <property type="hits" value="13 hits in 1142 CRISPR screens"/>
</dbReference>
<dbReference type="CD-CODE" id="FB4E32DD">
    <property type="entry name" value="Presynaptic clusters and postsynaptic densities"/>
</dbReference>
<dbReference type="ChiTaRS" id="CST1">
    <property type="organism name" value="human"/>
</dbReference>
<dbReference type="GeneWiki" id="CST1"/>
<dbReference type="GenomeRNAi" id="1469"/>
<dbReference type="Pharos" id="P01037">
    <property type="development level" value="Tbio"/>
</dbReference>
<dbReference type="PRO" id="PR:P01037"/>
<dbReference type="Proteomes" id="UP000005640">
    <property type="component" value="Chromosome 20"/>
</dbReference>
<dbReference type="RNAct" id="P01037">
    <property type="molecule type" value="protein"/>
</dbReference>
<dbReference type="Bgee" id="ENSG00000170373">
    <property type="expression patterns" value="Expressed in gall bladder and 83 other cell types or tissues"/>
</dbReference>
<dbReference type="GO" id="GO:0005737">
    <property type="term" value="C:cytoplasm"/>
    <property type="evidence" value="ECO:0000318"/>
    <property type="project" value="GO_Central"/>
</dbReference>
<dbReference type="GO" id="GO:0005615">
    <property type="term" value="C:extracellular space"/>
    <property type="evidence" value="ECO:0000314"/>
    <property type="project" value="UniProtKB"/>
</dbReference>
<dbReference type="GO" id="GO:0031982">
    <property type="term" value="C:vesicle"/>
    <property type="evidence" value="ECO:0000318"/>
    <property type="project" value="GO_Central"/>
</dbReference>
<dbReference type="GO" id="GO:0004869">
    <property type="term" value="F:cysteine-type endopeptidase inhibitor activity"/>
    <property type="evidence" value="ECO:0000318"/>
    <property type="project" value="GO_Central"/>
</dbReference>
<dbReference type="GO" id="GO:0001580">
    <property type="term" value="P:detection of chemical stimulus involved in sensory perception of bitter taste"/>
    <property type="evidence" value="ECO:0000314"/>
    <property type="project" value="UniProtKB"/>
</dbReference>
<dbReference type="CDD" id="cd00042">
    <property type="entry name" value="CY"/>
    <property type="match status" value="1"/>
</dbReference>
<dbReference type="FunFam" id="3.10.450.10:FF:000004">
    <property type="entry name" value="Cystatin C"/>
    <property type="match status" value="1"/>
</dbReference>
<dbReference type="Gene3D" id="3.10.450.10">
    <property type="match status" value="1"/>
</dbReference>
<dbReference type="InterPro" id="IPR000010">
    <property type="entry name" value="Cystatin_dom"/>
</dbReference>
<dbReference type="InterPro" id="IPR046350">
    <property type="entry name" value="Cystatin_sf"/>
</dbReference>
<dbReference type="InterPro" id="IPR018073">
    <property type="entry name" value="Prot_inh_cystat_CS"/>
</dbReference>
<dbReference type="PANTHER" id="PTHR46186">
    <property type="entry name" value="CYSTATIN"/>
    <property type="match status" value="1"/>
</dbReference>
<dbReference type="PANTHER" id="PTHR46186:SF5">
    <property type="entry name" value="CYSTATIN-SN"/>
    <property type="match status" value="1"/>
</dbReference>
<dbReference type="Pfam" id="PF00031">
    <property type="entry name" value="Cystatin"/>
    <property type="match status" value="1"/>
</dbReference>
<dbReference type="SMART" id="SM00043">
    <property type="entry name" value="CY"/>
    <property type="match status" value="1"/>
</dbReference>
<dbReference type="SUPFAM" id="SSF54403">
    <property type="entry name" value="Cystatin/monellin"/>
    <property type="match status" value="1"/>
</dbReference>
<dbReference type="PROSITE" id="PS00287">
    <property type="entry name" value="CYSTATIN"/>
    <property type="match status" value="1"/>
</dbReference>
<evidence type="ECO:0000269" key="1">
    <source>
    </source>
</evidence>
<evidence type="ECO:0000269" key="2">
    <source>
    </source>
</evidence>
<evidence type="ECO:0000269" key="3">
    <source>
    </source>
</evidence>
<evidence type="ECO:0000269" key="4">
    <source>
    </source>
</evidence>
<evidence type="ECO:0000269" key="5">
    <source>
    </source>
</evidence>
<evidence type="ECO:0000269" key="6">
    <source>
    </source>
</evidence>
<evidence type="ECO:0000305" key="7"/>
<keyword id="KW-0903">Direct protein sequencing</keyword>
<keyword id="KW-1015">Disulfide bond</keyword>
<keyword id="KW-0646">Protease inhibitor</keyword>
<keyword id="KW-1267">Proteomics identification</keyword>
<keyword id="KW-1185">Reference proteome</keyword>
<keyword id="KW-0964">Secreted</keyword>
<keyword id="KW-0732">Signal</keyword>
<keyword id="KW-0789">Thiol protease inhibitor</keyword>
<sequence>MAQYLSTLLLLLATLAVALAWSPKEEDRIIPGGIYNADLNDEWVQRALHFAISEYNKATKDDYYRRPLRVLRARQQTVGGVNYFFDVEVGRTICTKSQPNLDTCAFHEQPELQKKQLCSFEIYEVPWENRRSLVKSRCQES</sequence>